<reference key="1">
    <citation type="journal article" date="1999" name="J. Bacteriol.">
        <title>Identification of the miaB gene, involved in methylthiolation of isopentenylated A37 derivatives in the tRNA of Salmonella typhimurium and Escherichia coli.</title>
        <authorList>
            <person name="Esberg B."/>
            <person name="Leung H.-C.E."/>
            <person name="Tsui H.-C.T."/>
            <person name="Bjoerk G.R."/>
            <person name="Winkler M.E."/>
        </authorList>
    </citation>
    <scope>NUCLEOTIDE SEQUENCE [GENOMIC DNA]</scope>
    <scope>FUNCTION</scope>
    <scope>MUTAGENESIS OF GLY-79; CYS-83 AND ARG-233</scope>
    <source>
        <strain>GT522</strain>
    </source>
</reference>
<reference key="2">
    <citation type="journal article" date="2001" name="Nature">
        <title>Complete genome sequence of Salmonella enterica serovar Typhimurium LT2.</title>
        <authorList>
            <person name="McClelland M."/>
            <person name="Sanderson K.E."/>
            <person name="Spieth J."/>
            <person name="Clifton S.W."/>
            <person name="Latreille P."/>
            <person name="Courtney L."/>
            <person name="Porwollik S."/>
            <person name="Ali J."/>
            <person name="Dante M."/>
            <person name="Du F."/>
            <person name="Hou S."/>
            <person name="Layman D."/>
            <person name="Leonard S."/>
            <person name="Nguyen C."/>
            <person name="Scott K."/>
            <person name="Holmes A."/>
            <person name="Grewal N."/>
            <person name="Mulvaney E."/>
            <person name="Ryan E."/>
            <person name="Sun H."/>
            <person name="Florea L."/>
            <person name="Miller W."/>
            <person name="Stoneking T."/>
            <person name="Nhan M."/>
            <person name="Waterston R."/>
            <person name="Wilson R.K."/>
        </authorList>
    </citation>
    <scope>NUCLEOTIDE SEQUENCE [LARGE SCALE GENOMIC DNA]</scope>
    <source>
        <strain>LT2 / SGSC1412 / ATCC 700720</strain>
    </source>
</reference>
<gene>
    <name evidence="2 5" type="primary">miaB</name>
    <name type="ordered locus">STM0670</name>
</gene>
<comment type="function">
    <text evidence="6">Catalyzes the methylthiolation of N6-(dimethylallyl)adenosine (i(6)A), leading to the formation of 2-methylthio-N6-(dimethylallyl)adenosine (ms(2)i(6)A) at position 37 in tRNAs that read codons beginning with uridine.</text>
</comment>
<comment type="catalytic activity">
    <reaction evidence="2 6">
        <text>N(6)-dimethylallyladenosine(37) in tRNA + (sulfur carrier)-SH + AH2 + 2 S-adenosyl-L-methionine = 2-methylsulfanyl-N(6)-dimethylallyladenosine(37) in tRNA + (sulfur carrier)-H + 5'-deoxyadenosine + L-methionine + A + S-adenosyl-L-homocysteine + 2 H(+)</text>
        <dbReference type="Rhea" id="RHEA:37067"/>
        <dbReference type="Rhea" id="RHEA-COMP:10375"/>
        <dbReference type="Rhea" id="RHEA-COMP:10376"/>
        <dbReference type="Rhea" id="RHEA-COMP:14737"/>
        <dbReference type="Rhea" id="RHEA-COMP:14739"/>
        <dbReference type="ChEBI" id="CHEBI:13193"/>
        <dbReference type="ChEBI" id="CHEBI:15378"/>
        <dbReference type="ChEBI" id="CHEBI:17319"/>
        <dbReference type="ChEBI" id="CHEBI:17499"/>
        <dbReference type="ChEBI" id="CHEBI:29917"/>
        <dbReference type="ChEBI" id="CHEBI:57844"/>
        <dbReference type="ChEBI" id="CHEBI:57856"/>
        <dbReference type="ChEBI" id="CHEBI:59789"/>
        <dbReference type="ChEBI" id="CHEBI:64428"/>
        <dbReference type="ChEBI" id="CHEBI:74415"/>
        <dbReference type="ChEBI" id="CHEBI:74417"/>
        <dbReference type="EC" id="2.8.4.3"/>
    </reaction>
    <physiologicalReaction direction="left-to-right" evidence="6">
        <dbReference type="Rhea" id="RHEA:37068"/>
    </physiologicalReaction>
</comment>
<comment type="catalytic activity">
    <reaction evidence="1">
        <text>N(6)-dimethylallyladenosine(37) in tRNA + (sulfur carrier)-SH + AH2 + S-adenosyl-L-methionine = 2-thio-N(6)-dimethylallyladenosine(37) in tRNA + (sulfur carrier)-H + 5'-deoxyadenosine + L-methionine + A + H(+)</text>
        <dbReference type="Rhea" id="RHEA:36339"/>
        <dbReference type="Rhea" id="RHEA-COMP:10375"/>
        <dbReference type="Rhea" id="RHEA-COMP:10377"/>
        <dbReference type="Rhea" id="RHEA-COMP:14737"/>
        <dbReference type="Rhea" id="RHEA-COMP:14739"/>
        <dbReference type="ChEBI" id="CHEBI:13193"/>
        <dbReference type="ChEBI" id="CHEBI:15378"/>
        <dbReference type="ChEBI" id="CHEBI:17319"/>
        <dbReference type="ChEBI" id="CHEBI:17499"/>
        <dbReference type="ChEBI" id="CHEBI:29917"/>
        <dbReference type="ChEBI" id="CHEBI:57844"/>
        <dbReference type="ChEBI" id="CHEBI:59789"/>
        <dbReference type="ChEBI" id="CHEBI:64428"/>
        <dbReference type="ChEBI" id="CHEBI:74415"/>
        <dbReference type="ChEBI" id="CHEBI:74416"/>
    </reaction>
    <physiologicalReaction direction="left-to-right" evidence="1">
        <dbReference type="Rhea" id="RHEA:36340"/>
    </physiologicalReaction>
</comment>
<comment type="catalytic activity">
    <reaction evidence="1">
        <text>2-thio-N(6)-dimethylallyladenosine(37) in tRNA + S-adenosyl-L-methionine = 2-methylsulfanyl-N(6)-dimethylallyladenosine(37) in tRNA + S-adenosyl-L-homocysteine + H(+)</text>
        <dbReference type="Rhea" id="RHEA:37063"/>
        <dbReference type="Rhea" id="RHEA-COMP:10376"/>
        <dbReference type="Rhea" id="RHEA-COMP:10377"/>
        <dbReference type="ChEBI" id="CHEBI:15378"/>
        <dbReference type="ChEBI" id="CHEBI:57856"/>
        <dbReference type="ChEBI" id="CHEBI:59789"/>
        <dbReference type="ChEBI" id="CHEBI:74416"/>
        <dbReference type="ChEBI" id="CHEBI:74417"/>
    </reaction>
    <physiologicalReaction direction="left-to-right" evidence="1">
        <dbReference type="Rhea" id="RHEA:37064"/>
    </physiologicalReaction>
</comment>
<comment type="cofactor">
    <cofactor evidence="2">
        <name>[4Fe-4S] cluster</name>
        <dbReference type="ChEBI" id="CHEBI:49883"/>
    </cofactor>
    <text evidence="2">Binds 2 [4Fe-4S] clusters. One cluster is coordinated with 3 cysteines and an exchangeable S-adenosyl-L-methionine.</text>
</comment>
<comment type="subunit">
    <text evidence="2">Monomer.</text>
</comment>
<comment type="subcellular location">
    <subcellularLocation>
        <location evidence="2">Cytoplasm</location>
    </subcellularLocation>
</comment>
<comment type="similarity">
    <text evidence="2">Belongs to the methylthiotransferase family. MiaB subfamily.</text>
</comment>
<keyword id="KW-0004">4Fe-4S</keyword>
<keyword id="KW-0963">Cytoplasm</keyword>
<keyword id="KW-0408">Iron</keyword>
<keyword id="KW-0411">Iron-sulfur</keyword>
<keyword id="KW-0479">Metal-binding</keyword>
<keyword id="KW-1185">Reference proteome</keyword>
<keyword id="KW-0949">S-adenosyl-L-methionine</keyword>
<keyword id="KW-0808">Transferase</keyword>
<keyword id="KW-0819">tRNA processing</keyword>
<name>MIAB_SALTY</name>
<protein>
    <recommendedName>
        <fullName evidence="2">tRNA-2-methylthio-N(6)-dimethylallyladenosine synthase</fullName>
        <ecNumber evidence="2 6">2.8.4.3</ecNumber>
    </recommendedName>
    <alternativeName>
        <fullName evidence="2">(Dimethylallyl)adenosine tRNA methylthiotransferase MiaB</fullName>
    </alternativeName>
    <alternativeName>
        <fullName evidence="2">tRNA-i(6)A37 methylthiotransferase</fullName>
    </alternativeName>
</protein>
<evidence type="ECO:0000250" key="1">
    <source>
        <dbReference type="UniProtKB" id="Q9WZC1"/>
    </source>
</evidence>
<evidence type="ECO:0000255" key="2">
    <source>
        <dbReference type="HAMAP-Rule" id="MF_01864"/>
    </source>
</evidence>
<evidence type="ECO:0000255" key="3">
    <source>
        <dbReference type="PROSITE-ProRule" id="PRU01266"/>
    </source>
</evidence>
<evidence type="ECO:0000269" key="4">
    <source>
    </source>
</evidence>
<evidence type="ECO:0000303" key="5">
    <source>
    </source>
</evidence>
<evidence type="ECO:0000305" key="6">
    <source>
    </source>
</evidence>
<feature type="chain" id="PRO_0000359589" description="tRNA-2-methylthio-N(6)-dimethylallyladenosine synthase">
    <location>
        <begin position="1"/>
        <end position="474"/>
    </location>
</feature>
<feature type="domain" description="MTTase N-terminal" evidence="2">
    <location>
        <begin position="3"/>
        <end position="120"/>
    </location>
</feature>
<feature type="domain" description="Radical SAM core" evidence="3">
    <location>
        <begin position="143"/>
        <end position="375"/>
    </location>
</feature>
<feature type="domain" description="TRAM" evidence="2">
    <location>
        <begin position="378"/>
        <end position="441"/>
    </location>
</feature>
<feature type="binding site" evidence="2">
    <location>
        <position position="12"/>
    </location>
    <ligand>
        <name>[4Fe-4S] cluster</name>
        <dbReference type="ChEBI" id="CHEBI:49883"/>
        <label>1</label>
    </ligand>
</feature>
<feature type="binding site" evidence="2">
    <location>
        <position position="49"/>
    </location>
    <ligand>
        <name>[4Fe-4S] cluster</name>
        <dbReference type="ChEBI" id="CHEBI:49883"/>
        <label>1</label>
    </ligand>
</feature>
<feature type="binding site" evidence="2">
    <location>
        <position position="83"/>
    </location>
    <ligand>
        <name>[4Fe-4S] cluster</name>
        <dbReference type="ChEBI" id="CHEBI:49883"/>
        <label>1</label>
    </ligand>
</feature>
<feature type="binding site" evidence="2">
    <location>
        <position position="157"/>
    </location>
    <ligand>
        <name>[4Fe-4S] cluster</name>
        <dbReference type="ChEBI" id="CHEBI:49883"/>
        <label>2</label>
        <note>4Fe-4S-S-AdoMet</note>
    </ligand>
</feature>
<feature type="binding site" evidence="2">
    <location>
        <position position="161"/>
    </location>
    <ligand>
        <name>[4Fe-4S] cluster</name>
        <dbReference type="ChEBI" id="CHEBI:49883"/>
        <label>2</label>
        <note>4Fe-4S-S-AdoMet</note>
    </ligand>
</feature>
<feature type="binding site" evidence="2">
    <location>
        <position position="164"/>
    </location>
    <ligand>
        <name>[4Fe-4S] cluster</name>
        <dbReference type="ChEBI" id="CHEBI:49883"/>
        <label>2</label>
        <note>4Fe-4S-S-AdoMet</note>
    </ligand>
</feature>
<feature type="mutagenesis site" description="Loss of activity." evidence="4">
    <original>G</original>
    <variation>D</variation>
    <location>
        <position position="79"/>
    </location>
</feature>
<feature type="mutagenesis site" description="Loss of activity." evidence="4">
    <original>C</original>
    <variation>Y</variation>
    <location>
        <position position="83"/>
    </location>
</feature>
<feature type="mutagenesis site" description="Loss of activity at elevated temperature." evidence="4">
    <original>R</original>
    <variation>H</variation>
    <location>
        <position position="233"/>
    </location>
</feature>
<dbReference type="EC" id="2.8.4.3" evidence="2 6"/>
<dbReference type="EMBL" id="AJ249116">
    <property type="protein sequence ID" value="CAB62263.1"/>
    <property type="molecule type" value="Genomic_DNA"/>
</dbReference>
<dbReference type="EMBL" id="AE006468">
    <property type="protein sequence ID" value="AAL19621.1"/>
    <property type="molecule type" value="Genomic_DNA"/>
</dbReference>
<dbReference type="RefSeq" id="NP_459662.1">
    <property type="nucleotide sequence ID" value="NC_003197.2"/>
</dbReference>
<dbReference type="RefSeq" id="WP_001519200.1">
    <property type="nucleotide sequence ID" value="NC_003197.2"/>
</dbReference>
<dbReference type="SMR" id="Q9RCI2"/>
<dbReference type="STRING" id="99287.STM0670"/>
<dbReference type="PaxDb" id="99287-STM0670"/>
<dbReference type="DNASU" id="1252190"/>
<dbReference type="GeneID" id="1252190"/>
<dbReference type="KEGG" id="stm:STM0670"/>
<dbReference type="PATRIC" id="fig|99287.12.peg.707"/>
<dbReference type="HOGENOM" id="CLU_018697_2_0_6"/>
<dbReference type="OMA" id="CEHFHIP"/>
<dbReference type="PhylomeDB" id="Q9RCI2"/>
<dbReference type="BioCyc" id="SENT99287:STM0670-MONOMER"/>
<dbReference type="Proteomes" id="UP000001014">
    <property type="component" value="Chromosome"/>
</dbReference>
<dbReference type="GO" id="GO:0005829">
    <property type="term" value="C:cytosol"/>
    <property type="evidence" value="ECO:0000318"/>
    <property type="project" value="GO_Central"/>
</dbReference>
<dbReference type="GO" id="GO:0051539">
    <property type="term" value="F:4 iron, 4 sulfur cluster binding"/>
    <property type="evidence" value="ECO:0000318"/>
    <property type="project" value="GO_Central"/>
</dbReference>
<dbReference type="GO" id="GO:0046872">
    <property type="term" value="F:metal ion binding"/>
    <property type="evidence" value="ECO:0007669"/>
    <property type="project" value="UniProtKB-KW"/>
</dbReference>
<dbReference type="GO" id="GO:0035597">
    <property type="term" value="F:N6-isopentenyladenosine methylthiotransferase activity"/>
    <property type="evidence" value="ECO:0000318"/>
    <property type="project" value="GO_Central"/>
</dbReference>
<dbReference type="GO" id="GO:0035600">
    <property type="term" value="P:tRNA methylthiolation"/>
    <property type="evidence" value="ECO:0000318"/>
    <property type="project" value="GO_Central"/>
</dbReference>
<dbReference type="CDD" id="cd01335">
    <property type="entry name" value="Radical_SAM"/>
    <property type="match status" value="1"/>
</dbReference>
<dbReference type="FunFam" id="3.40.50.12160:FF:000001">
    <property type="entry name" value="tRNA-2-methylthio-N(6)-dimethylallyladenosine synthase"/>
    <property type="match status" value="1"/>
</dbReference>
<dbReference type="FunFam" id="3.80.30.20:FF:000001">
    <property type="entry name" value="tRNA-2-methylthio-N(6)-dimethylallyladenosine synthase 2"/>
    <property type="match status" value="1"/>
</dbReference>
<dbReference type="Gene3D" id="3.40.50.12160">
    <property type="entry name" value="Methylthiotransferase, N-terminal domain"/>
    <property type="match status" value="1"/>
</dbReference>
<dbReference type="Gene3D" id="3.80.30.20">
    <property type="entry name" value="tm_1862 like domain"/>
    <property type="match status" value="1"/>
</dbReference>
<dbReference type="HAMAP" id="MF_01864">
    <property type="entry name" value="tRNA_metthiotr_MiaB"/>
    <property type="match status" value="1"/>
</dbReference>
<dbReference type="InterPro" id="IPR006638">
    <property type="entry name" value="Elp3/MiaA/NifB-like_rSAM"/>
</dbReference>
<dbReference type="InterPro" id="IPR005839">
    <property type="entry name" value="Methylthiotransferase"/>
</dbReference>
<dbReference type="InterPro" id="IPR020612">
    <property type="entry name" value="Methylthiotransferase_CS"/>
</dbReference>
<dbReference type="InterPro" id="IPR013848">
    <property type="entry name" value="Methylthiotransferase_N"/>
</dbReference>
<dbReference type="InterPro" id="IPR038135">
    <property type="entry name" value="Methylthiotransferase_N_sf"/>
</dbReference>
<dbReference type="InterPro" id="IPR006463">
    <property type="entry name" value="MiaB_methiolase"/>
</dbReference>
<dbReference type="InterPro" id="IPR007197">
    <property type="entry name" value="rSAM"/>
</dbReference>
<dbReference type="InterPro" id="IPR023404">
    <property type="entry name" value="rSAM_horseshoe"/>
</dbReference>
<dbReference type="InterPro" id="IPR002792">
    <property type="entry name" value="TRAM_dom"/>
</dbReference>
<dbReference type="NCBIfam" id="TIGR01574">
    <property type="entry name" value="miaB-methiolase"/>
    <property type="match status" value="1"/>
</dbReference>
<dbReference type="NCBIfam" id="TIGR00089">
    <property type="entry name" value="MiaB/RimO family radical SAM methylthiotransferase"/>
    <property type="match status" value="1"/>
</dbReference>
<dbReference type="PANTHER" id="PTHR43020">
    <property type="entry name" value="CDK5 REGULATORY SUBUNIT-ASSOCIATED PROTEIN 1"/>
    <property type="match status" value="1"/>
</dbReference>
<dbReference type="PANTHER" id="PTHR43020:SF2">
    <property type="entry name" value="MITOCHONDRIAL TRNA METHYLTHIOTRANSFERASE CDK5RAP1"/>
    <property type="match status" value="1"/>
</dbReference>
<dbReference type="Pfam" id="PF04055">
    <property type="entry name" value="Radical_SAM"/>
    <property type="match status" value="1"/>
</dbReference>
<dbReference type="Pfam" id="PF01938">
    <property type="entry name" value="TRAM"/>
    <property type="match status" value="1"/>
</dbReference>
<dbReference type="Pfam" id="PF00919">
    <property type="entry name" value="UPF0004"/>
    <property type="match status" value="1"/>
</dbReference>
<dbReference type="SFLD" id="SFLDF00273">
    <property type="entry name" value="(dimethylallyl)adenosine_tRNA"/>
    <property type="match status" value="1"/>
</dbReference>
<dbReference type="SFLD" id="SFLDG01082">
    <property type="entry name" value="B12-binding_domain_containing"/>
    <property type="match status" value="1"/>
</dbReference>
<dbReference type="SFLD" id="SFLDS00029">
    <property type="entry name" value="Radical_SAM"/>
    <property type="match status" value="1"/>
</dbReference>
<dbReference type="SMART" id="SM00729">
    <property type="entry name" value="Elp3"/>
    <property type="match status" value="1"/>
</dbReference>
<dbReference type="SUPFAM" id="SSF102114">
    <property type="entry name" value="Radical SAM enzymes"/>
    <property type="match status" value="1"/>
</dbReference>
<dbReference type="PROSITE" id="PS51449">
    <property type="entry name" value="MTTASE_N"/>
    <property type="match status" value="1"/>
</dbReference>
<dbReference type="PROSITE" id="PS01278">
    <property type="entry name" value="MTTASE_RADICAL"/>
    <property type="match status" value="1"/>
</dbReference>
<dbReference type="PROSITE" id="PS51918">
    <property type="entry name" value="RADICAL_SAM"/>
    <property type="match status" value="1"/>
</dbReference>
<dbReference type="PROSITE" id="PS50926">
    <property type="entry name" value="TRAM"/>
    <property type="match status" value="1"/>
</dbReference>
<accession>Q9RCI2</accession>
<accession>Q7CQY6</accession>
<organism>
    <name type="scientific">Salmonella typhimurium (strain LT2 / SGSC1412 / ATCC 700720)</name>
    <dbReference type="NCBI Taxonomy" id="99287"/>
    <lineage>
        <taxon>Bacteria</taxon>
        <taxon>Pseudomonadati</taxon>
        <taxon>Pseudomonadota</taxon>
        <taxon>Gammaproteobacteria</taxon>
        <taxon>Enterobacterales</taxon>
        <taxon>Enterobacteriaceae</taxon>
        <taxon>Salmonella</taxon>
    </lineage>
</organism>
<sequence>MTKKLHIKTWGCQMNEYDSSKMADLLDATHGYQLTDVAEEADVLLLNTCSIREKAQEKVFHQLGRWRLLKEKNPDLIIGVGGCVASQEGEHIRQRAHYVDIIFGPQTLHRLPEMINSVRGDRSPVVDISFPEIEKFDRLPEPRAEGPTAFVSIMEGCNKYCTYCVVPYTRGEEVSRPSDDILFEIAQLAAQGVREVNLLGQNVNAWRGENYDGTTGTFADLLRLVAAIDGIDRIRFTTSHPIEFTDDIIEVYRDTPELVSFLHLPVQSGSDRVLNLMGRTHTALEYKAIIRKLRAARPDIQISSDFIVGFPGETTDDFEKTMKLIADVNFDMSYSFIFSARPGTPAADMVDDVPEEEKKQRLYILQERINQQAMAWSRRMLGTTQRILVEGTSRKNIMELSGRTENNRVVNFEGTPEMIGKFVDVEITDVYPNSLRGKVVRTEDEMGLRVAETPESVIARTRKENELGVGFYQP</sequence>
<proteinExistence type="evidence at protein level"/>